<evidence type="ECO:0000255" key="1">
    <source>
        <dbReference type="HAMAP-Rule" id="MF_01018"/>
    </source>
</evidence>
<organism>
    <name type="scientific">Bacillus cereus (strain G9842)</name>
    <dbReference type="NCBI Taxonomy" id="405531"/>
    <lineage>
        <taxon>Bacteria</taxon>
        <taxon>Bacillati</taxon>
        <taxon>Bacillota</taxon>
        <taxon>Bacilli</taxon>
        <taxon>Bacillales</taxon>
        <taxon>Bacillaceae</taxon>
        <taxon>Bacillus</taxon>
        <taxon>Bacillus cereus group</taxon>
    </lineage>
</organism>
<accession>B7IN98</accession>
<gene>
    <name evidence="1" type="primary">hisG</name>
    <name type="ordered locus">BCG9842_B3886</name>
</gene>
<protein>
    <recommendedName>
        <fullName evidence="1">ATP phosphoribosyltransferase</fullName>
        <shortName evidence="1">ATP-PRT</shortName>
        <shortName evidence="1">ATP-PRTase</shortName>
        <ecNumber evidence="1">2.4.2.17</ecNumber>
    </recommendedName>
</protein>
<proteinExistence type="inferred from homology"/>
<reference key="1">
    <citation type="submission" date="2008-10" db="EMBL/GenBank/DDBJ databases">
        <title>Genome sequence of Bacillus cereus G9842.</title>
        <authorList>
            <person name="Dodson R.J."/>
            <person name="Durkin A.S."/>
            <person name="Rosovitz M.J."/>
            <person name="Rasko D.A."/>
            <person name="Hoffmaster A."/>
            <person name="Ravel J."/>
            <person name="Sutton G."/>
        </authorList>
    </citation>
    <scope>NUCLEOTIDE SEQUENCE [LARGE SCALE GENOMIC DNA]</scope>
    <source>
        <strain>G9842</strain>
    </source>
</reference>
<name>HIS1_BACC2</name>
<dbReference type="EC" id="2.4.2.17" evidence="1"/>
<dbReference type="EMBL" id="CP001186">
    <property type="protein sequence ID" value="ACK93760.1"/>
    <property type="molecule type" value="Genomic_DNA"/>
</dbReference>
<dbReference type="RefSeq" id="WP_001244492.1">
    <property type="nucleotide sequence ID" value="NC_011772.1"/>
</dbReference>
<dbReference type="SMR" id="B7IN98"/>
<dbReference type="KEGG" id="bcg:BCG9842_B3886"/>
<dbReference type="HOGENOM" id="CLU_038115_2_0_9"/>
<dbReference type="UniPathway" id="UPA00031">
    <property type="reaction ID" value="UER00006"/>
</dbReference>
<dbReference type="Proteomes" id="UP000006744">
    <property type="component" value="Chromosome"/>
</dbReference>
<dbReference type="GO" id="GO:0005737">
    <property type="term" value="C:cytoplasm"/>
    <property type="evidence" value="ECO:0007669"/>
    <property type="project" value="UniProtKB-SubCell"/>
</dbReference>
<dbReference type="GO" id="GO:0005524">
    <property type="term" value="F:ATP binding"/>
    <property type="evidence" value="ECO:0007669"/>
    <property type="project" value="UniProtKB-KW"/>
</dbReference>
<dbReference type="GO" id="GO:0003879">
    <property type="term" value="F:ATP phosphoribosyltransferase activity"/>
    <property type="evidence" value="ECO:0007669"/>
    <property type="project" value="UniProtKB-UniRule"/>
</dbReference>
<dbReference type="GO" id="GO:0000105">
    <property type="term" value="P:L-histidine biosynthetic process"/>
    <property type="evidence" value="ECO:0007669"/>
    <property type="project" value="UniProtKB-UniRule"/>
</dbReference>
<dbReference type="CDD" id="cd13595">
    <property type="entry name" value="PBP2_HisGs"/>
    <property type="match status" value="1"/>
</dbReference>
<dbReference type="FunFam" id="3.40.190.10:FF:000011">
    <property type="entry name" value="ATP phosphoribosyltransferase"/>
    <property type="match status" value="1"/>
</dbReference>
<dbReference type="Gene3D" id="3.40.190.10">
    <property type="entry name" value="Periplasmic binding protein-like II"/>
    <property type="match status" value="2"/>
</dbReference>
<dbReference type="HAMAP" id="MF_01018">
    <property type="entry name" value="HisG_Short"/>
    <property type="match status" value="1"/>
</dbReference>
<dbReference type="InterPro" id="IPR013820">
    <property type="entry name" value="ATP_PRibTrfase_cat"/>
</dbReference>
<dbReference type="InterPro" id="IPR018198">
    <property type="entry name" value="ATP_PRibTrfase_CS"/>
</dbReference>
<dbReference type="InterPro" id="IPR001348">
    <property type="entry name" value="ATP_PRibTrfase_HisG"/>
</dbReference>
<dbReference type="InterPro" id="IPR024893">
    <property type="entry name" value="ATP_PRibTrfase_HisG_short"/>
</dbReference>
<dbReference type="NCBIfam" id="TIGR00070">
    <property type="entry name" value="hisG"/>
    <property type="match status" value="1"/>
</dbReference>
<dbReference type="PANTHER" id="PTHR21403:SF8">
    <property type="entry name" value="ATP PHOSPHORIBOSYLTRANSFERASE"/>
    <property type="match status" value="1"/>
</dbReference>
<dbReference type="PANTHER" id="PTHR21403">
    <property type="entry name" value="ATP PHOSPHORIBOSYLTRANSFERASE ATP-PRTASE"/>
    <property type="match status" value="1"/>
</dbReference>
<dbReference type="Pfam" id="PF01634">
    <property type="entry name" value="HisG"/>
    <property type="match status" value="1"/>
</dbReference>
<dbReference type="SUPFAM" id="SSF53850">
    <property type="entry name" value="Periplasmic binding protein-like II"/>
    <property type="match status" value="1"/>
</dbReference>
<dbReference type="PROSITE" id="PS01316">
    <property type="entry name" value="ATP_P_PHORIBOSYLTR"/>
    <property type="match status" value="1"/>
</dbReference>
<keyword id="KW-0028">Amino-acid biosynthesis</keyword>
<keyword id="KW-0067">ATP-binding</keyword>
<keyword id="KW-0963">Cytoplasm</keyword>
<keyword id="KW-0328">Glycosyltransferase</keyword>
<keyword id="KW-0368">Histidine biosynthesis</keyword>
<keyword id="KW-0547">Nucleotide-binding</keyword>
<keyword id="KW-0808">Transferase</keyword>
<comment type="function">
    <text evidence="1">Catalyzes the condensation of ATP and 5-phosphoribose 1-diphosphate to form N'-(5'-phosphoribosyl)-ATP (PR-ATP). Has a crucial role in the pathway because the rate of histidine biosynthesis seems to be controlled primarily by regulation of HisG enzymatic activity.</text>
</comment>
<comment type="catalytic activity">
    <reaction evidence="1">
        <text>1-(5-phospho-beta-D-ribosyl)-ATP + diphosphate = 5-phospho-alpha-D-ribose 1-diphosphate + ATP</text>
        <dbReference type="Rhea" id="RHEA:18473"/>
        <dbReference type="ChEBI" id="CHEBI:30616"/>
        <dbReference type="ChEBI" id="CHEBI:33019"/>
        <dbReference type="ChEBI" id="CHEBI:58017"/>
        <dbReference type="ChEBI" id="CHEBI:73183"/>
        <dbReference type="EC" id="2.4.2.17"/>
    </reaction>
</comment>
<comment type="pathway">
    <text evidence="1">Amino-acid biosynthesis; L-histidine biosynthesis; L-histidine from 5-phospho-alpha-D-ribose 1-diphosphate: step 1/9.</text>
</comment>
<comment type="subunit">
    <text evidence="1">Heteromultimer composed of HisG and HisZ subunits.</text>
</comment>
<comment type="subcellular location">
    <subcellularLocation>
        <location evidence="1">Cytoplasm</location>
    </subcellularLocation>
</comment>
<comment type="domain">
    <text>Lacks the C-terminal regulatory region which is replaced by HisZ.</text>
</comment>
<comment type="similarity">
    <text evidence="1">Belongs to the ATP phosphoribosyltransferase family. Short subfamily.</text>
</comment>
<feature type="chain" id="PRO_1000135267" description="ATP phosphoribosyltransferase">
    <location>
        <begin position="1"/>
        <end position="211"/>
    </location>
</feature>
<sequence>MRNIQIALTKGRLEKHVIPLFEQIGIDCSELKNKGRKLVFQSKNTNVSFILVKAVDVATYVEHGVADIGIVGKDILMENEKDIYEMLDLGVGICKFCVASIPTYNPKSYRKKRIATKYPHITSTYFHDKGEDVEIIKIEGSVEIAPLLGLADAIVDIVETGKTLQENGLIVFEEMHSISARMIVNKAALKTKKDEIFSIVNMMEQEILSGK</sequence>